<sequence length="467" mass="52807">MTSELWHQCLGYLEDELPAQQFNTWLRPLQAKGSEEELLLFAPNRFVLDWVNEKYIGRINEILSELTSQKAPRISLKIGSITGNSKGQQASKDSAVGATRTTAPSRPVIADVAPSGERNVTVEGAIKHESYLNPTFTFETFVEGKSNQLARAAAMQVADNPGSAYNPLFLYGGVGLGKTHLMQAVGNAIFKKNPNAKILYLHSERFVADMVKALQLNAFNEFKRLYRSVDALLIDDIQFFARKERSQEEFFHTFNALLEGGQQMILTCDRYPKEIDHMEERLKSRFGWGLTVMVEPPELETRVAILMKKAEQANVHLSSESAFFIAQKIRSNVRELEGALKLVIANAHFTGQEITPAFIRECLKDLLALHEKQVSIDNIQRTVAEYYKIRIADILSKRRTRSITRPRQMAMALAKELTNHSLPEIGEAFGGRDHTTVLHACKVMIELQQSDPTLRDDYQNFMRMLTS</sequence>
<dbReference type="EMBL" id="CP000155">
    <property type="protein sequence ID" value="ABC26925.1"/>
    <property type="molecule type" value="Genomic_DNA"/>
</dbReference>
<dbReference type="RefSeq" id="WP_011394002.1">
    <property type="nucleotide sequence ID" value="NC_007645.1"/>
</dbReference>
<dbReference type="SMR" id="Q2SQZ9"/>
<dbReference type="STRING" id="349521.HCH_00002"/>
<dbReference type="KEGG" id="hch:HCH_00002"/>
<dbReference type="eggNOG" id="COG0593">
    <property type="taxonomic scope" value="Bacteria"/>
</dbReference>
<dbReference type="HOGENOM" id="CLU_026910_0_1_6"/>
<dbReference type="OrthoDB" id="9807019at2"/>
<dbReference type="Proteomes" id="UP000000238">
    <property type="component" value="Chromosome"/>
</dbReference>
<dbReference type="GO" id="GO:0005737">
    <property type="term" value="C:cytoplasm"/>
    <property type="evidence" value="ECO:0007669"/>
    <property type="project" value="UniProtKB-SubCell"/>
</dbReference>
<dbReference type="GO" id="GO:0005886">
    <property type="term" value="C:plasma membrane"/>
    <property type="evidence" value="ECO:0007669"/>
    <property type="project" value="TreeGrafter"/>
</dbReference>
<dbReference type="GO" id="GO:0005524">
    <property type="term" value="F:ATP binding"/>
    <property type="evidence" value="ECO:0007669"/>
    <property type="project" value="UniProtKB-UniRule"/>
</dbReference>
<dbReference type="GO" id="GO:0016887">
    <property type="term" value="F:ATP hydrolysis activity"/>
    <property type="evidence" value="ECO:0007669"/>
    <property type="project" value="InterPro"/>
</dbReference>
<dbReference type="GO" id="GO:0003688">
    <property type="term" value="F:DNA replication origin binding"/>
    <property type="evidence" value="ECO:0007669"/>
    <property type="project" value="UniProtKB-UniRule"/>
</dbReference>
<dbReference type="GO" id="GO:0008289">
    <property type="term" value="F:lipid binding"/>
    <property type="evidence" value="ECO:0007669"/>
    <property type="project" value="UniProtKB-KW"/>
</dbReference>
<dbReference type="GO" id="GO:0006270">
    <property type="term" value="P:DNA replication initiation"/>
    <property type="evidence" value="ECO:0007669"/>
    <property type="project" value="UniProtKB-UniRule"/>
</dbReference>
<dbReference type="GO" id="GO:0006275">
    <property type="term" value="P:regulation of DNA replication"/>
    <property type="evidence" value="ECO:0007669"/>
    <property type="project" value="UniProtKB-UniRule"/>
</dbReference>
<dbReference type="CDD" id="cd00009">
    <property type="entry name" value="AAA"/>
    <property type="match status" value="1"/>
</dbReference>
<dbReference type="CDD" id="cd06571">
    <property type="entry name" value="Bac_DnaA_C"/>
    <property type="match status" value="1"/>
</dbReference>
<dbReference type="FunFam" id="1.10.8.60:FF:000003">
    <property type="entry name" value="Chromosomal replication initiator protein DnaA"/>
    <property type="match status" value="1"/>
</dbReference>
<dbReference type="FunFam" id="3.40.50.300:FF:000103">
    <property type="entry name" value="Chromosomal replication initiator protein DnaA"/>
    <property type="match status" value="1"/>
</dbReference>
<dbReference type="Gene3D" id="1.10.1750.10">
    <property type="match status" value="1"/>
</dbReference>
<dbReference type="Gene3D" id="1.10.8.60">
    <property type="match status" value="1"/>
</dbReference>
<dbReference type="Gene3D" id="3.30.300.180">
    <property type="match status" value="1"/>
</dbReference>
<dbReference type="Gene3D" id="3.40.50.300">
    <property type="entry name" value="P-loop containing nucleotide triphosphate hydrolases"/>
    <property type="match status" value="1"/>
</dbReference>
<dbReference type="HAMAP" id="MF_00377">
    <property type="entry name" value="DnaA_bact"/>
    <property type="match status" value="1"/>
</dbReference>
<dbReference type="InterPro" id="IPR003593">
    <property type="entry name" value="AAA+_ATPase"/>
</dbReference>
<dbReference type="InterPro" id="IPR001957">
    <property type="entry name" value="Chromosome_initiator_DnaA"/>
</dbReference>
<dbReference type="InterPro" id="IPR020591">
    <property type="entry name" value="Chromosome_initiator_DnaA-like"/>
</dbReference>
<dbReference type="InterPro" id="IPR018312">
    <property type="entry name" value="Chromosome_initiator_DnaA_CS"/>
</dbReference>
<dbReference type="InterPro" id="IPR013159">
    <property type="entry name" value="DnaA_C"/>
</dbReference>
<dbReference type="InterPro" id="IPR013317">
    <property type="entry name" value="DnaA_dom"/>
</dbReference>
<dbReference type="InterPro" id="IPR024633">
    <property type="entry name" value="DnaA_N_dom"/>
</dbReference>
<dbReference type="InterPro" id="IPR038454">
    <property type="entry name" value="DnaA_N_sf"/>
</dbReference>
<dbReference type="InterPro" id="IPR027417">
    <property type="entry name" value="P-loop_NTPase"/>
</dbReference>
<dbReference type="InterPro" id="IPR010921">
    <property type="entry name" value="Trp_repressor/repl_initiator"/>
</dbReference>
<dbReference type="NCBIfam" id="TIGR00362">
    <property type="entry name" value="DnaA"/>
    <property type="match status" value="1"/>
</dbReference>
<dbReference type="PANTHER" id="PTHR30050">
    <property type="entry name" value="CHROMOSOMAL REPLICATION INITIATOR PROTEIN DNAA"/>
    <property type="match status" value="1"/>
</dbReference>
<dbReference type="PANTHER" id="PTHR30050:SF2">
    <property type="entry name" value="CHROMOSOMAL REPLICATION INITIATOR PROTEIN DNAA"/>
    <property type="match status" value="1"/>
</dbReference>
<dbReference type="Pfam" id="PF00308">
    <property type="entry name" value="Bac_DnaA"/>
    <property type="match status" value="1"/>
</dbReference>
<dbReference type="Pfam" id="PF08299">
    <property type="entry name" value="Bac_DnaA_C"/>
    <property type="match status" value="1"/>
</dbReference>
<dbReference type="Pfam" id="PF11638">
    <property type="entry name" value="DnaA_N"/>
    <property type="match status" value="1"/>
</dbReference>
<dbReference type="PRINTS" id="PR00051">
    <property type="entry name" value="DNAA"/>
</dbReference>
<dbReference type="SMART" id="SM00382">
    <property type="entry name" value="AAA"/>
    <property type="match status" value="1"/>
</dbReference>
<dbReference type="SMART" id="SM00760">
    <property type="entry name" value="Bac_DnaA_C"/>
    <property type="match status" value="1"/>
</dbReference>
<dbReference type="SUPFAM" id="SSF52540">
    <property type="entry name" value="P-loop containing nucleoside triphosphate hydrolases"/>
    <property type="match status" value="1"/>
</dbReference>
<dbReference type="SUPFAM" id="SSF48295">
    <property type="entry name" value="TrpR-like"/>
    <property type="match status" value="1"/>
</dbReference>
<dbReference type="PROSITE" id="PS01008">
    <property type="entry name" value="DNAA"/>
    <property type="match status" value="1"/>
</dbReference>
<organism>
    <name type="scientific">Hahella chejuensis (strain KCTC 2396)</name>
    <dbReference type="NCBI Taxonomy" id="349521"/>
    <lineage>
        <taxon>Bacteria</taxon>
        <taxon>Pseudomonadati</taxon>
        <taxon>Pseudomonadota</taxon>
        <taxon>Gammaproteobacteria</taxon>
        <taxon>Oceanospirillales</taxon>
        <taxon>Hahellaceae</taxon>
        <taxon>Hahella</taxon>
    </lineage>
</organism>
<feature type="chain" id="PRO_1000048652" description="Chromosomal replication initiator protein DnaA">
    <location>
        <begin position="1"/>
        <end position="467"/>
    </location>
</feature>
<feature type="region of interest" description="Domain I, interacts with DnaA modulators" evidence="1">
    <location>
        <begin position="1"/>
        <end position="80"/>
    </location>
</feature>
<feature type="region of interest" description="Domain II" evidence="1">
    <location>
        <begin position="80"/>
        <end position="130"/>
    </location>
</feature>
<feature type="region of interest" description="Domain III, AAA+ region" evidence="1">
    <location>
        <begin position="131"/>
        <end position="347"/>
    </location>
</feature>
<feature type="region of interest" description="Domain IV, binds dsDNA" evidence="1">
    <location>
        <begin position="348"/>
        <end position="467"/>
    </location>
</feature>
<feature type="binding site" evidence="1">
    <location>
        <position position="175"/>
    </location>
    <ligand>
        <name>ATP</name>
        <dbReference type="ChEBI" id="CHEBI:30616"/>
    </ligand>
</feature>
<feature type="binding site" evidence="1">
    <location>
        <position position="177"/>
    </location>
    <ligand>
        <name>ATP</name>
        <dbReference type="ChEBI" id="CHEBI:30616"/>
    </ligand>
</feature>
<feature type="binding site" evidence="1">
    <location>
        <position position="178"/>
    </location>
    <ligand>
        <name>ATP</name>
        <dbReference type="ChEBI" id="CHEBI:30616"/>
    </ligand>
</feature>
<feature type="binding site" evidence="1">
    <location>
        <position position="179"/>
    </location>
    <ligand>
        <name>ATP</name>
        <dbReference type="ChEBI" id="CHEBI:30616"/>
    </ligand>
</feature>
<evidence type="ECO:0000255" key="1">
    <source>
        <dbReference type="HAMAP-Rule" id="MF_00377"/>
    </source>
</evidence>
<keyword id="KW-0067">ATP-binding</keyword>
<keyword id="KW-0963">Cytoplasm</keyword>
<keyword id="KW-0235">DNA replication</keyword>
<keyword id="KW-0238">DNA-binding</keyword>
<keyword id="KW-0446">Lipid-binding</keyword>
<keyword id="KW-0547">Nucleotide-binding</keyword>
<keyword id="KW-1185">Reference proteome</keyword>
<comment type="function">
    <text evidence="1">Plays an essential role in the initiation and regulation of chromosomal replication. ATP-DnaA binds to the origin of replication (oriC) to initiate formation of the DNA replication initiation complex once per cell cycle. Binds the DnaA box (a 9 base pair repeat at the origin) and separates the double-stranded (ds)DNA. Forms a right-handed helical filament on oriC DNA; dsDNA binds to the exterior of the filament while single-stranded (ss)DNA is stabiized in the filament's interior. The ATP-DnaA-oriC complex binds and stabilizes one strand of the AT-rich DNA unwinding element (DUE), permitting loading of DNA polymerase. After initiation quickly degrades to an ADP-DnaA complex that is not apt for DNA replication. Binds acidic phospholipids.</text>
</comment>
<comment type="subunit">
    <text evidence="1">Oligomerizes as a right-handed, spiral filament on DNA at oriC.</text>
</comment>
<comment type="subcellular location">
    <subcellularLocation>
        <location evidence="1">Cytoplasm</location>
    </subcellularLocation>
</comment>
<comment type="domain">
    <text evidence="1">Domain I is involved in oligomerization and binding regulators, domain II is flexibile and of varying length in different bacteria, domain III forms the AAA+ region, while domain IV binds dsDNA.</text>
</comment>
<comment type="similarity">
    <text evidence="1">Belongs to the DnaA family.</text>
</comment>
<proteinExistence type="inferred from homology"/>
<protein>
    <recommendedName>
        <fullName evidence="1">Chromosomal replication initiator protein DnaA</fullName>
    </recommendedName>
</protein>
<gene>
    <name evidence="1" type="primary">dnaA</name>
    <name type="ordered locus">HCH_00002</name>
</gene>
<name>DNAA_HAHCH</name>
<accession>Q2SQZ9</accession>
<reference key="1">
    <citation type="journal article" date="2005" name="Nucleic Acids Res.">
        <title>Genomic blueprint of Hahella chejuensis, a marine microbe producing an algicidal agent.</title>
        <authorList>
            <person name="Jeong H."/>
            <person name="Yim J.H."/>
            <person name="Lee C."/>
            <person name="Choi S.-H."/>
            <person name="Park Y.K."/>
            <person name="Yoon S.H."/>
            <person name="Hur C.-G."/>
            <person name="Kang H.-Y."/>
            <person name="Kim D."/>
            <person name="Lee H.H."/>
            <person name="Park K.H."/>
            <person name="Park S.-H."/>
            <person name="Park H.-S."/>
            <person name="Lee H.K."/>
            <person name="Oh T.K."/>
            <person name="Kim J.F."/>
        </authorList>
    </citation>
    <scope>NUCLEOTIDE SEQUENCE [LARGE SCALE GENOMIC DNA]</scope>
    <source>
        <strain>KCTC 2396</strain>
    </source>
</reference>